<sequence>MNLKNHFLVAMPSMKDPFFQRSVIYICEHDSDGTMGLRINEPVQISLKGMLDQIELDNPSPIIFPQTLSQPVLNGGPVSDDRGFVLHSNKDNYLSSIQVTDELSVTTSKDILATLGTEYQPYKYLVALGYSGWEGGQLEKELSENTWLTLEADPSVIFDTPIPDRWRKALQLLGINPANLSSEIGHA</sequence>
<name>Y434_ALIFM</name>
<reference key="1">
    <citation type="submission" date="2008-08" db="EMBL/GenBank/DDBJ databases">
        <title>Complete sequence of Vibrio fischeri strain MJ11.</title>
        <authorList>
            <person name="Mandel M.J."/>
            <person name="Stabb E.V."/>
            <person name="Ruby E.G."/>
            <person name="Ferriera S."/>
            <person name="Johnson J."/>
            <person name="Kravitz S."/>
            <person name="Beeson K."/>
            <person name="Sutton G."/>
            <person name="Rogers Y.-H."/>
            <person name="Friedman R."/>
            <person name="Frazier M."/>
            <person name="Venter J.C."/>
        </authorList>
    </citation>
    <scope>NUCLEOTIDE SEQUENCE [LARGE SCALE GENOMIC DNA]</scope>
    <source>
        <strain>MJ11</strain>
    </source>
</reference>
<protein>
    <recommendedName>
        <fullName evidence="1">UPF0301 protein VFMJ11_0434</fullName>
    </recommendedName>
</protein>
<accession>B5F9S7</accession>
<evidence type="ECO:0000255" key="1">
    <source>
        <dbReference type="HAMAP-Rule" id="MF_00758"/>
    </source>
</evidence>
<organism>
    <name type="scientific">Aliivibrio fischeri (strain MJ11)</name>
    <name type="common">Vibrio fischeri</name>
    <dbReference type="NCBI Taxonomy" id="388396"/>
    <lineage>
        <taxon>Bacteria</taxon>
        <taxon>Pseudomonadati</taxon>
        <taxon>Pseudomonadota</taxon>
        <taxon>Gammaproteobacteria</taxon>
        <taxon>Vibrionales</taxon>
        <taxon>Vibrionaceae</taxon>
        <taxon>Aliivibrio</taxon>
    </lineage>
</organism>
<feature type="chain" id="PRO_1000198304" description="UPF0301 protein VFMJ11_0434">
    <location>
        <begin position="1"/>
        <end position="187"/>
    </location>
</feature>
<gene>
    <name type="ordered locus">VFMJ11_0434</name>
</gene>
<comment type="similarity">
    <text evidence="1">Belongs to the UPF0301 (AlgH) family.</text>
</comment>
<proteinExistence type="inferred from homology"/>
<dbReference type="EMBL" id="CP001139">
    <property type="protein sequence ID" value="ACH65794.1"/>
    <property type="molecule type" value="Genomic_DNA"/>
</dbReference>
<dbReference type="RefSeq" id="WP_005417575.1">
    <property type="nucleotide sequence ID" value="NC_011184.1"/>
</dbReference>
<dbReference type="SMR" id="B5F9S7"/>
<dbReference type="GeneID" id="54163071"/>
<dbReference type="KEGG" id="vfm:VFMJ11_0434"/>
<dbReference type="HOGENOM" id="CLU_057596_1_0_6"/>
<dbReference type="Proteomes" id="UP000001857">
    <property type="component" value="Chromosome I"/>
</dbReference>
<dbReference type="GO" id="GO:0005829">
    <property type="term" value="C:cytosol"/>
    <property type="evidence" value="ECO:0007669"/>
    <property type="project" value="TreeGrafter"/>
</dbReference>
<dbReference type="Gene3D" id="3.40.1740.10">
    <property type="entry name" value="VC0467-like"/>
    <property type="match status" value="1"/>
</dbReference>
<dbReference type="HAMAP" id="MF_00758">
    <property type="entry name" value="UPF0301"/>
    <property type="match status" value="1"/>
</dbReference>
<dbReference type="InterPro" id="IPR003774">
    <property type="entry name" value="AlgH-like"/>
</dbReference>
<dbReference type="NCBIfam" id="NF001266">
    <property type="entry name" value="PRK00228.1-1"/>
    <property type="match status" value="1"/>
</dbReference>
<dbReference type="PANTHER" id="PTHR30327">
    <property type="entry name" value="UNCHARACTERIZED PROTEIN YQGE"/>
    <property type="match status" value="1"/>
</dbReference>
<dbReference type="PANTHER" id="PTHR30327:SF1">
    <property type="entry name" value="UPF0301 PROTEIN YQGE"/>
    <property type="match status" value="1"/>
</dbReference>
<dbReference type="Pfam" id="PF02622">
    <property type="entry name" value="DUF179"/>
    <property type="match status" value="1"/>
</dbReference>
<dbReference type="SUPFAM" id="SSF143456">
    <property type="entry name" value="VC0467-like"/>
    <property type="match status" value="1"/>
</dbReference>